<dbReference type="EMBL" id="CP000016">
    <property type="protein sequence ID" value="AAZ41193.1"/>
    <property type="molecule type" value="Genomic_DNA"/>
</dbReference>
<dbReference type="RefSeq" id="WP_011283104.1">
    <property type="nucleotide sequence ID" value="NC_007292.1"/>
</dbReference>
<dbReference type="SMR" id="Q492A9"/>
<dbReference type="STRING" id="291272.BPEN_587"/>
<dbReference type="KEGG" id="bpn:BPEN_587"/>
<dbReference type="eggNOG" id="COG0048">
    <property type="taxonomic scope" value="Bacteria"/>
</dbReference>
<dbReference type="HOGENOM" id="CLU_104295_1_2_6"/>
<dbReference type="OrthoDB" id="9802366at2"/>
<dbReference type="Proteomes" id="UP000007794">
    <property type="component" value="Chromosome"/>
</dbReference>
<dbReference type="GO" id="GO:0015935">
    <property type="term" value="C:small ribosomal subunit"/>
    <property type="evidence" value="ECO:0007669"/>
    <property type="project" value="InterPro"/>
</dbReference>
<dbReference type="GO" id="GO:0019843">
    <property type="term" value="F:rRNA binding"/>
    <property type="evidence" value="ECO:0007669"/>
    <property type="project" value="UniProtKB-UniRule"/>
</dbReference>
<dbReference type="GO" id="GO:0003735">
    <property type="term" value="F:structural constituent of ribosome"/>
    <property type="evidence" value="ECO:0007669"/>
    <property type="project" value="InterPro"/>
</dbReference>
<dbReference type="GO" id="GO:0000049">
    <property type="term" value="F:tRNA binding"/>
    <property type="evidence" value="ECO:0007669"/>
    <property type="project" value="UniProtKB-UniRule"/>
</dbReference>
<dbReference type="GO" id="GO:0006412">
    <property type="term" value="P:translation"/>
    <property type="evidence" value="ECO:0007669"/>
    <property type="project" value="UniProtKB-UniRule"/>
</dbReference>
<dbReference type="CDD" id="cd03368">
    <property type="entry name" value="Ribosomal_S12"/>
    <property type="match status" value="1"/>
</dbReference>
<dbReference type="FunFam" id="2.40.50.140:FF:000001">
    <property type="entry name" value="30S ribosomal protein S12"/>
    <property type="match status" value="1"/>
</dbReference>
<dbReference type="Gene3D" id="2.40.50.140">
    <property type="entry name" value="Nucleic acid-binding proteins"/>
    <property type="match status" value="1"/>
</dbReference>
<dbReference type="HAMAP" id="MF_00403_B">
    <property type="entry name" value="Ribosomal_uS12_B"/>
    <property type="match status" value="1"/>
</dbReference>
<dbReference type="InterPro" id="IPR012340">
    <property type="entry name" value="NA-bd_OB-fold"/>
</dbReference>
<dbReference type="InterPro" id="IPR006032">
    <property type="entry name" value="Ribosomal_uS12"/>
</dbReference>
<dbReference type="InterPro" id="IPR005679">
    <property type="entry name" value="Ribosomal_uS12_bac"/>
</dbReference>
<dbReference type="NCBIfam" id="TIGR00981">
    <property type="entry name" value="rpsL_bact"/>
    <property type="match status" value="1"/>
</dbReference>
<dbReference type="PANTHER" id="PTHR11652">
    <property type="entry name" value="30S RIBOSOMAL PROTEIN S12 FAMILY MEMBER"/>
    <property type="match status" value="1"/>
</dbReference>
<dbReference type="Pfam" id="PF00164">
    <property type="entry name" value="Ribosom_S12_S23"/>
    <property type="match status" value="1"/>
</dbReference>
<dbReference type="PIRSF" id="PIRSF002133">
    <property type="entry name" value="Ribosomal_S12/S23"/>
    <property type="match status" value="1"/>
</dbReference>
<dbReference type="PRINTS" id="PR01034">
    <property type="entry name" value="RIBOSOMALS12"/>
</dbReference>
<dbReference type="SUPFAM" id="SSF50249">
    <property type="entry name" value="Nucleic acid-binding proteins"/>
    <property type="match status" value="1"/>
</dbReference>
<dbReference type="PROSITE" id="PS00055">
    <property type="entry name" value="RIBOSOMAL_S12"/>
    <property type="match status" value="1"/>
</dbReference>
<accession>Q492A9</accession>
<name>RS12_BLOPB</name>
<proteinExistence type="inferred from homology"/>
<sequence>MTTVNQLVRNARPTKTFKSNVPALGACPQKRGVCVRVYTTTPKKPNSALRKVCRVRLTNGLEVTSYIGGEGHNLQEHASILIRGGRVKDLPGVRYHVVRGALDCAGVHSRKKSRSKYGTKQPKS</sequence>
<gene>
    <name evidence="2" type="primary">rpsL</name>
    <name type="ordered locus">BPEN_587</name>
</gene>
<comment type="function">
    <text evidence="2">With S4 and S5 plays an important role in translational accuracy.</text>
</comment>
<comment type="function">
    <text evidence="2">Interacts with and stabilizes bases of the 16S rRNA that are involved in tRNA selection in the A site and with the mRNA backbone. Located at the interface of the 30S and 50S subunits, it traverses the body of the 30S subunit contacting proteins on the other side and probably holding the rRNA structure together. The combined cluster of proteins S8, S12 and S17 appears to hold together the shoulder and platform of the 30S subunit.</text>
</comment>
<comment type="subunit">
    <text evidence="2">Part of the 30S ribosomal subunit. Contacts proteins S8 and S17. May interact with IF1 in the 30S initiation complex.</text>
</comment>
<comment type="similarity">
    <text evidence="2">Belongs to the universal ribosomal protein uS12 family.</text>
</comment>
<protein>
    <recommendedName>
        <fullName evidence="2">Small ribosomal subunit protein uS12</fullName>
    </recommendedName>
    <alternativeName>
        <fullName evidence="3">30S ribosomal protein S12</fullName>
    </alternativeName>
</protein>
<feature type="chain" id="PRO_0000226376" description="Small ribosomal subunit protein uS12">
    <location>
        <begin position="1"/>
        <end position="124"/>
    </location>
</feature>
<feature type="modified residue" description="3-methylthioaspartic acid" evidence="1">
    <location>
        <position position="89"/>
    </location>
</feature>
<evidence type="ECO:0000250" key="1"/>
<evidence type="ECO:0000255" key="2">
    <source>
        <dbReference type="HAMAP-Rule" id="MF_00403"/>
    </source>
</evidence>
<evidence type="ECO:0000305" key="3"/>
<organism>
    <name type="scientific">Blochmanniella pennsylvanica (strain BPEN)</name>
    <dbReference type="NCBI Taxonomy" id="291272"/>
    <lineage>
        <taxon>Bacteria</taxon>
        <taxon>Pseudomonadati</taxon>
        <taxon>Pseudomonadota</taxon>
        <taxon>Gammaproteobacteria</taxon>
        <taxon>Enterobacterales</taxon>
        <taxon>Enterobacteriaceae</taxon>
        <taxon>ant endosymbionts</taxon>
        <taxon>Candidatus Blochmanniella</taxon>
    </lineage>
</organism>
<keyword id="KW-0488">Methylation</keyword>
<keyword id="KW-1185">Reference proteome</keyword>
<keyword id="KW-0687">Ribonucleoprotein</keyword>
<keyword id="KW-0689">Ribosomal protein</keyword>
<keyword id="KW-0694">RNA-binding</keyword>
<keyword id="KW-0699">rRNA-binding</keyword>
<keyword id="KW-0820">tRNA-binding</keyword>
<reference key="1">
    <citation type="journal article" date="2005" name="Genome Res.">
        <title>Genome sequence of Blochmannia pennsylvanicus indicates parallel evolutionary trends among bacterial mutualists of insects.</title>
        <authorList>
            <person name="Degnan P.H."/>
            <person name="Lazarus A.B."/>
            <person name="Wernegreen J.J."/>
        </authorList>
    </citation>
    <scope>NUCLEOTIDE SEQUENCE [LARGE SCALE GENOMIC DNA]</scope>
    <source>
        <strain>BPEN</strain>
    </source>
</reference>